<reference key="1">
    <citation type="journal article" date="2004" name="Nature">
        <title>Genome evolution in yeasts.</title>
        <authorList>
            <person name="Dujon B."/>
            <person name="Sherman D."/>
            <person name="Fischer G."/>
            <person name="Durrens P."/>
            <person name="Casaregola S."/>
            <person name="Lafontaine I."/>
            <person name="de Montigny J."/>
            <person name="Marck C."/>
            <person name="Neuveglise C."/>
            <person name="Talla E."/>
            <person name="Goffard N."/>
            <person name="Frangeul L."/>
            <person name="Aigle M."/>
            <person name="Anthouard V."/>
            <person name="Babour A."/>
            <person name="Barbe V."/>
            <person name="Barnay S."/>
            <person name="Blanchin S."/>
            <person name="Beckerich J.-M."/>
            <person name="Beyne E."/>
            <person name="Bleykasten C."/>
            <person name="Boisrame A."/>
            <person name="Boyer J."/>
            <person name="Cattolico L."/>
            <person name="Confanioleri F."/>
            <person name="de Daruvar A."/>
            <person name="Despons L."/>
            <person name="Fabre E."/>
            <person name="Fairhead C."/>
            <person name="Ferry-Dumazet H."/>
            <person name="Groppi A."/>
            <person name="Hantraye F."/>
            <person name="Hennequin C."/>
            <person name="Jauniaux N."/>
            <person name="Joyet P."/>
            <person name="Kachouri R."/>
            <person name="Kerrest A."/>
            <person name="Koszul R."/>
            <person name="Lemaire M."/>
            <person name="Lesur I."/>
            <person name="Ma L."/>
            <person name="Muller H."/>
            <person name="Nicaud J.-M."/>
            <person name="Nikolski M."/>
            <person name="Oztas S."/>
            <person name="Ozier-Kalogeropoulos O."/>
            <person name="Pellenz S."/>
            <person name="Potier S."/>
            <person name="Richard G.-F."/>
            <person name="Straub M.-L."/>
            <person name="Suleau A."/>
            <person name="Swennen D."/>
            <person name="Tekaia F."/>
            <person name="Wesolowski-Louvel M."/>
            <person name="Westhof E."/>
            <person name="Wirth B."/>
            <person name="Zeniou-Meyer M."/>
            <person name="Zivanovic Y."/>
            <person name="Bolotin-Fukuhara M."/>
            <person name="Thierry A."/>
            <person name="Bouchier C."/>
            <person name="Caudron B."/>
            <person name="Scarpelli C."/>
            <person name="Gaillardin C."/>
            <person name="Weissenbach J."/>
            <person name="Wincker P."/>
            <person name="Souciet J.-L."/>
        </authorList>
    </citation>
    <scope>NUCLEOTIDE SEQUENCE [LARGE SCALE GENOMIC DNA]</scope>
    <source>
        <strain>ATCC 8585 / CBS 2359 / DSM 70799 / NBRC 1267 / NRRL Y-1140 / WM37</strain>
    </source>
</reference>
<comment type="function">
    <text evidence="1">Required for retention of late Golgi membrane proteins. Component of the retrieval machinery that functions by direct interaction with the cytosolic tails of certain TGN membrane proteins during the sorting/budding process at the prevacuolar compartment. Binds phosphatidylinositol 3-phosphate (PtdIns(P3)) (By similarity).</text>
</comment>
<comment type="subcellular location">
    <subcellularLocation>
        <location evidence="1">Cytoplasm</location>
    </subcellularLocation>
    <subcellularLocation>
        <location evidence="3">Golgi apparatus membrane</location>
        <topology evidence="3">Peripheral membrane protein</topology>
        <orientation evidence="3">Cytoplasmic side</orientation>
    </subcellularLocation>
    <subcellularLocation>
        <location evidence="3">Prevacuolar compartment membrane</location>
        <topology evidence="3">Peripheral membrane protein</topology>
        <orientation evidence="3">Cytoplasmic side</orientation>
    </subcellularLocation>
</comment>
<comment type="domain">
    <text evidence="1">The PX domain binds phosphatidylinositol 3-phosphate which is necessary for peripheral membrane localization.</text>
</comment>
<comment type="similarity">
    <text evidence="3">Belongs to the sorting nexin family.</text>
</comment>
<proteinExistence type="inferred from homology"/>
<evidence type="ECO:0000250" key="1"/>
<evidence type="ECO:0000255" key="2">
    <source>
        <dbReference type="PROSITE-ProRule" id="PRU00147"/>
    </source>
</evidence>
<evidence type="ECO:0000305" key="3"/>
<organism>
    <name type="scientific">Kluyveromyces lactis (strain ATCC 8585 / CBS 2359 / DSM 70799 / NBRC 1267 / NRRL Y-1140 / WM37)</name>
    <name type="common">Yeast</name>
    <name type="synonym">Candida sphaerica</name>
    <dbReference type="NCBI Taxonomy" id="284590"/>
    <lineage>
        <taxon>Eukaryota</taxon>
        <taxon>Fungi</taxon>
        <taxon>Dikarya</taxon>
        <taxon>Ascomycota</taxon>
        <taxon>Saccharomycotina</taxon>
        <taxon>Saccharomycetes</taxon>
        <taxon>Saccharomycetales</taxon>
        <taxon>Saccharomycetaceae</taxon>
        <taxon>Kluyveromyces</taxon>
    </lineage>
</organism>
<protein>
    <recommendedName>
        <fullName>Sorting nexin-3</fullName>
    </recommendedName>
</protein>
<gene>
    <name type="primary">SNX3</name>
    <name type="ordered locus">KLLA0A03718g</name>
</gene>
<sequence length="164" mass="18713">MCPQRQFQSFTTTAESTLSHTTHKQLSGATIYDEPENFLEIEVCNPKTHFPSGDAKGMYTDYEIICRTNLPGFSKRSSSVRRRYSDFELFRKLLIKELQLSNHPKVSVQHLPGKILLSNRFSDAVIEERRQGLNKWLASVAGHPLLQTGSKVLVRFIQDPTFQG</sequence>
<keyword id="KW-0963">Cytoplasm</keyword>
<keyword id="KW-0333">Golgi apparatus</keyword>
<keyword id="KW-0446">Lipid-binding</keyword>
<keyword id="KW-0472">Membrane</keyword>
<keyword id="KW-0653">Protein transport</keyword>
<keyword id="KW-1185">Reference proteome</keyword>
<keyword id="KW-0813">Transport</keyword>
<feature type="chain" id="PRO_0000238588" description="Sorting nexin-3">
    <location>
        <begin position="1"/>
        <end position="164"/>
    </location>
</feature>
<feature type="domain" description="PX" evidence="2">
    <location>
        <begin position="40"/>
        <end position="163"/>
    </location>
</feature>
<feature type="binding site" evidence="1">
    <location>
        <position position="83"/>
    </location>
    <ligand>
        <name>a 1,2-diacyl-sn-glycero-3-phospho-(1D-myo-inositol-3-phosphate)</name>
        <dbReference type="ChEBI" id="CHEBI:58088"/>
    </ligand>
</feature>
<feature type="binding site" evidence="1">
    <location>
        <position position="85"/>
    </location>
    <ligand>
        <name>a 1,2-diacyl-sn-glycero-3-phospho-(1D-myo-inositol-3-phosphate)</name>
        <dbReference type="ChEBI" id="CHEBI:58088"/>
    </ligand>
</feature>
<feature type="binding site" evidence="1">
    <location>
        <position position="114"/>
    </location>
    <ligand>
        <name>a 1,2-diacyl-sn-glycero-3-phospho-(1D-myo-inositol-3-phosphate)</name>
        <dbReference type="ChEBI" id="CHEBI:58088"/>
    </ligand>
</feature>
<feature type="binding site" evidence="1">
    <location>
        <position position="120"/>
    </location>
    <ligand>
        <name>a 1,2-diacyl-sn-glycero-3-phospho-(1D-myo-inositol-3-phosphate)</name>
        <dbReference type="ChEBI" id="CHEBI:58088"/>
    </ligand>
</feature>
<feature type="binding site" evidence="1">
    <location>
        <position position="129"/>
    </location>
    <ligand>
        <name>a 1,2-diacyl-sn-glycero-3-phospho-(1D-myo-inositol-3-phosphate)</name>
        <dbReference type="ChEBI" id="CHEBI:58088"/>
    </ligand>
</feature>
<name>SNX3_KLULA</name>
<accession>Q6CY25</accession>
<dbReference type="EMBL" id="CR382121">
    <property type="protein sequence ID" value="CAH02752.1"/>
    <property type="molecule type" value="Genomic_DNA"/>
</dbReference>
<dbReference type="RefSeq" id="XP_451164.1">
    <property type="nucleotide sequence ID" value="XM_451164.1"/>
</dbReference>
<dbReference type="SMR" id="Q6CY25"/>
<dbReference type="FunCoup" id="Q6CY25">
    <property type="interactions" value="523"/>
</dbReference>
<dbReference type="STRING" id="284590.Q6CY25"/>
<dbReference type="PaxDb" id="284590-Q6CY25"/>
<dbReference type="KEGG" id="kla:KLLA0_A03718g"/>
<dbReference type="eggNOG" id="KOG2527">
    <property type="taxonomic scope" value="Eukaryota"/>
</dbReference>
<dbReference type="HOGENOM" id="CLU_057172_2_1_1"/>
<dbReference type="InParanoid" id="Q6CY25"/>
<dbReference type="OMA" id="NMYTDYE"/>
<dbReference type="Proteomes" id="UP000000598">
    <property type="component" value="Chromosome A"/>
</dbReference>
<dbReference type="GO" id="GO:0031901">
    <property type="term" value="C:early endosome membrane"/>
    <property type="evidence" value="ECO:0007669"/>
    <property type="project" value="TreeGrafter"/>
</dbReference>
<dbReference type="GO" id="GO:0000139">
    <property type="term" value="C:Golgi membrane"/>
    <property type="evidence" value="ECO:0007669"/>
    <property type="project" value="UniProtKB-SubCell"/>
</dbReference>
<dbReference type="GO" id="GO:0030904">
    <property type="term" value="C:retromer complex"/>
    <property type="evidence" value="ECO:0007669"/>
    <property type="project" value="TreeGrafter"/>
</dbReference>
<dbReference type="GO" id="GO:0032266">
    <property type="term" value="F:phosphatidylinositol-3-phosphate binding"/>
    <property type="evidence" value="ECO:0007669"/>
    <property type="project" value="TreeGrafter"/>
</dbReference>
<dbReference type="GO" id="GO:0032456">
    <property type="term" value="P:endocytic recycling"/>
    <property type="evidence" value="ECO:0007669"/>
    <property type="project" value="TreeGrafter"/>
</dbReference>
<dbReference type="GO" id="GO:0034499">
    <property type="term" value="P:late endosome to Golgi transport"/>
    <property type="evidence" value="ECO:0007669"/>
    <property type="project" value="TreeGrafter"/>
</dbReference>
<dbReference type="GO" id="GO:0015031">
    <property type="term" value="P:protein transport"/>
    <property type="evidence" value="ECO:0007669"/>
    <property type="project" value="UniProtKB-KW"/>
</dbReference>
<dbReference type="Gene3D" id="3.30.1520.10">
    <property type="entry name" value="Phox-like domain"/>
    <property type="match status" value="1"/>
</dbReference>
<dbReference type="InterPro" id="IPR001683">
    <property type="entry name" value="PX_dom"/>
</dbReference>
<dbReference type="InterPro" id="IPR036871">
    <property type="entry name" value="PX_dom_sf"/>
</dbReference>
<dbReference type="InterPro" id="IPR051074">
    <property type="entry name" value="Sorting_Nexin"/>
</dbReference>
<dbReference type="PANTHER" id="PTHR45963">
    <property type="entry name" value="RE52028P"/>
    <property type="match status" value="1"/>
</dbReference>
<dbReference type="PANTHER" id="PTHR45963:SF2">
    <property type="entry name" value="RE52028P"/>
    <property type="match status" value="1"/>
</dbReference>
<dbReference type="Pfam" id="PF00787">
    <property type="entry name" value="PX"/>
    <property type="match status" value="1"/>
</dbReference>
<dbReference type="SMART" id="SM00312">
    <property type="entry name" value="PX"/>
    <property type="match status" value="1"/>
</dbReference>
<dbReference type="SUPFAM" id="SSF64268">
    <property type="entry name" value="PX domain"/>
    <property type="match status" value="1"/>
</dbReference>
<dbReference type="PROSITE" id="PS50195">
    <property type="entry name" value="PX"/>
    <property type="match status" value="1"/>
</dbReference>